<proteinExistence type="inferred from homology"/>
<protein>
    <recommendedName>
        <fullName>Probable acetyl-CoA acyltransferase</fullName>
        <ecNumber>2.3.1.9</ecNumber>
    </recommendedName>
    <alternativeName>
        <fullName>Acetoacetyl-CoA thiolase</fullName>
    </alternativeName>
</protein>
<accession>Q5HS07</accession>
<feature type="chain" id="PRO_0000270509" description="Probable acetyl-CoA acyltransferase">
    <location>
        <begin position="1"/>
        <end position="394"/>
    </location>
</feature>
<feature type="active site" description="Acyl-thioester intermediate" evidence="1">
    <location>
        <position position="88"/>
    </location>
</feature>
<feature type="active site" description="Proton acceptor" evidence="2">
    <location>
        <position position="349"/>
    </location>
</feature>
<feature type="active site" description="Proton acceptor" evidence="2">
    <location>
        <position position="378"/>
    </location>
</feature>
<sequence>MSRIVLAEAYRTPIGVFGGVFKDIPAYELGATVIRQILEHSQIDPNEINEVILGNVLQAGQGQNPARIAAIHGGVPEAVPSFTVNKVCGSGLKAIQLAYQSIVAGDNEIVIAGGMESMSQSPMLLKNSRFGFKMGNQTLEDSMIADGLTDKFNDYHMGITAENLVEQYQISRKEQDQFAFDSQQKASRAQQAGVFDAEIVPVEVPQRKGDPLIISQDEGIRPQTTIDKLAQLRPAFKKDGSVTAGNASGINDGAAAMLVMTEDKAKALGLQPIAVLDSFGASGVAPSIMGIGPVEAIHKALKRSNKVINDVDIFELNEAFAAQSIAVNRELQLPQDKVNVNGGAIALGHPIGASGARTLVSLLHQLSDAKPTGVASLCIGGGQGIATVVSKYEV</sequence>
<name>THLA_STAEQ</name>
<organism>
    <name type="scientific">Staphylococcus epidermidis (strain ATCC 35984 / DSM 28319 / BCRC 17069 / CCUG 31568 / BM 3577 / RP62A)</name>
    <dbReference type="NCBI Taxonomy" id="176279"/>
    <lineage>
        <taxon>Bacteria</taxon>
        <taxon>Bacillati</taxon>
        <taxon>Bacillota</taxon>
        <taxon>Bacilli</taxon>
        <taxon>Bacillales</taxon>
        <taxon>Staphylococcaceae</taxon>
        <taxon>Staphylococcus</taxon>
    </lineage>
</organism>
<evidence type="ECO:0000250" key="1"/>
<evidence type="ECO:0000255" key="2">
    <source>
        <dbReference type="PROSITE-ProRule" id="PRU10020"/>
    </source>
</evidence>
<evidence type="ECO:0000305" key="3"/>
<reference key="1">
    <citation type="journal article" date="2005" name="J. Bacteriol.">
        <title>Insights on evolution of virulence and resistance from the complete genome analysis of an early methicillin-resistant Staphylococcus aureus strain and a biofilm-producing methicillin-resistant Staphylococcus epidermidis strain.</title>
        <authorList>
            <person name="Gill S.R."/>
            <person name="Fouts D.E."/>
            <person name="Archer G.L."/>
            <person name="Mongodin E.F."/>
            <person name="DeBoy R.T."/>
            <person name="Ravel J."/>
            <person name="Paulsen I.T."/>
            <person name="Kolonay J.F."/>
            <person name="Brinkac L.M."/>
            <person name="Beanan M.J."/>
            <person name="Dodson R.J."/>
            <person name="Daugherty S.C."/>
            <person name="Madupu R."/>
            <person name="Angiuoli S.V."/>
            <person name="Durkin A.S."/>
            <person name="Haft D.H."/>
            <person name="Vamathevan J.J."/>
            <person name="Khouri H."/>
            <person name="Utterback T.R."/>
            <person name="Lee C."/>
            <person name="Dimitrov G."/>
            <person name="Jiang L."/>
            <person name="Qin H."/>
            <person name="Weidman J."/>
            <person name="Tran K."/>
            <person name="Kang K.H."/>
            <person name="Hance I.R."/>
            <person name="Nelson K.E."/>
            <person name="Fraser C.M."/>
        </authorList>
    </citation>
    <scope>NUCLEOTIDE SEQUENCE [LARGE SCALE GENOMIC DNA]</scope>
    <source>
        <strain>ATCC 35984 / DSM 28319 / BCRC 17069 / CCUG 31568 / BM 3577 / RP62A</strain>
    </source>
</reference>
<keyword id="KW-0012">Acyltransferase</keyword>
<keyword id="KW-0963">Cytoplasm</keyword>
<keyword id="KW-1185">Reference proteome</keyword>
<keyword id="KW-0808">Transferase</keyword>
<comment type="catalytic activity">
    <reaction evidence="2">
        <text>2 acetyl-CoA = acetoacetyl-CoA + CoA</text>
        <dbReference type="Rhea" id="RHEA:21036"/>
        <dbReference type="ChEBI" id="CHEBI:57286"/>
        <dbReference type="ChEBI" id="CHEBI:57287"/>
        <dbReference type="ChEBI" id="CHEBI:57288"/>
        <dbReference type="EC" id="2.3.1.9"/>
    </reaction>
</comment>
<comment type="subcellular location">
    <subcellularLocation>
        <location evidence="1">Cytoplasm</location>
    </subcellularLocation>
</comment>
<comment type="similarity">
    <text evidence="3">Belongs to the thiolase-like superfamily. Thiolase family.</text>
</comment>
<dbReference type="EC" id="2.3.1.9"/>
<dbReference type="EMBL" id="CP000029">
    <property type="protein sequence ID" value="AAW53454.1"/>
    <property type="molecule type" value="Genomic_DNA"/>
</dbReference>
<dbReference type="RefSeq" id="WP_001831350.1">
    <property type="nucleotide sequence ID" value="NC_002976.3"/>
</dbReference>
<dbReference type="SMR" id="Q5HS07"/>
<dbReference type="STRING" id="176279.SERP0032"/>
<dbReference type="KEGG" id="ser:SERP0032"/>
<dbReference type="eggNOG" id="COG0183">
    <property type="taxonomic scope" value="Bacteria"/>
</dbReference>
<dbReference type="HOGENOM" id="CLU_031026_0_0_9"/>
<dbReference type="Proteomes" id="UP000000531">
    <property type="component" value="Chromosome"/>
</dbReference>
<dbReference type="GO" id="GO:0005737">
    <property type="term" value="C:cytoplasm"/>
    <property type="evidence" value="ECO:0007669"/>
    <property type="project" value="UniProtKB-SubCell"/>
</dbReference>
<dbReference type="GO" id="GO:0003985">
    <property type="term" value="F:acetyl-CoA C-acetyltransferase activity"/>
    <property type="evidence" value="ECO:0007669"/>
    <property type="project" value="UniProtKB-EC"/>
</dbReference>
<dbReference type="CDD" id="cd00751">
    <property type="entry name" value="thiolase"/>
    <property type="match status" value="1"/>
</dbReference>
<dbReference type="FunFam" id="3.40.47.10:FF:000010">
    <property type="entry name" value="Acetyl-CoA acetyltransferase (Thiolase)"/>
    <property type="match status" value="1"/>
</dbReference>
<dbReference type="Gene3D" id="3.40.47.10">
    <property type="match status" value="2"/>
</dbReference>
<dbReference type="InterPro" id="IPR002155">
    <property type="entry name" value="Thiolase"/>
</dbReference>
<dbReference type="InterPro" id="IPR016039">
    <property type="entry name" value="Thiolase-like"/>
</dbReference>
<dbReference type="InterPro" id="IPR020615">
    <property type="entry name" value="Thiolase_acyl_enz_int_AS"/>
</dbReference>
<dbReference type="InterPro" id="IPR020610">
    <property type="entry name" value="Thiolase_AS"/>
</dbReference>
<dbReference type="InterPro" id="IPR020617">
    <property type="entry name" value="Thiolase_C"/>
</dbReference>
<dbReference type="InterPro" id="IPR020613">
    <property type="entry name" value="Thiolase_CS"/>
</dbReference>
<dbReference type="InterPro" id="IPR020616">
    <property type="entry name" value="Thiolase_N"/>
</dbReference>
<dbReference type="NCBIfam" id="TIGR01930">
    <property type="entry name" value="AcCoA-C-Actrans"/>
    <property type="match status" value="1"/>
</dbReference>
<dbReference type="PANTHER" id="PTHR18919:SF107">
    <property type="entry name" value="ACETYL-COA ACETYLTRANSFERASE, CYTOSOLIC"/>
    <property type="match status" value="1"/>
</dbReference>
<dbReference type="PANTHER" id="PTHR18919">
    <property type="entry name" value="ACETYL-COA C-ACYLTRANSFERASE"/>
    <property type="match status" value="1"/>
</dbReference>
<dbReference type="Pfam" id="PF02803">
    <property type="entry name" value="Thiolase_C"/>
    <property type="match status" value="1"/>
</dbReference>
<dbReference type="Pfam" id="PF00108">
    <property type="entry name" value="Thiolase_N"/>
    <property type="match status" value="1"/>
</dbReference>
<dbReference type="PIRSF" id="PIRSF000429">
    <property type="entry name" value="Ac-CoA_Ac_transf"/>
    <property type="match status" value="1"/>
</dbReference>
<dbReference type="SUPFAM" id="SSF53901">
    <property type="entry name" value="Thiolase-like"/>
    <property type="match status" value="2"/>
</dbReference>
<dbReference type="PROSITE" id="PS00098">
    <property type="entry name" value="THIOLASE_1"/>
    <property type="match status" value="1"/>
</dbReference>
<dbReference type="PROSITE" id="PS00737">
    <property type="entry name" value="THIOLASE_2"/>
    <property type="match status" value="1"/>
</dbReference>
<dbReference type="PROSITE" id="PS00099">
    <property type="entry name" value="THIOLASE_3"/>
    <property type="match status" value="1"/>
</dbReference>
<gene>
    <name type="ordered locus">SERP0032</name>
</gene>